<reference key="1">
    <citation type="journal article" date="2002" name="Genome Res.">
        <title>The genome of Methanosarcina acetivorans reveals extensive metabolic and physiological diversity.</title>
        <authorList>
            <person name="Galagan J.E."/>
            <person name="Nusbaum C."/>
            <person name="Roy A."/>
            <person name="Endrizzi M.G."/>
            <person name="Macdonald P."/>
            <person name="FitzHugh W."/>
            <person name="Calvo S."/>
            <person name="Engels R."/>
            <person name="Smirnov S."/>
            <person name="Atnoor D."/>
            <person name="Brown A."/>
            <person name="Allen N."/>
            <person name="Naylor J."/>
            <person name="Stange-Thomann N."/>
            <person name="DeArellano K."/>
            <person name="Johnson R."/>
            <person name="Linton L."/>
            <person name="McEwan P."/>
            <person name="McKernan K."/>
            <person name="Talamas J."/>
            <person name="Tirrell A."/>
            <person name="Ye W."/>
            <person name="Zimmer A."/>
            <person name="Barber R.D."/>
            <person name="Cann I."/>
            <person name="Graham D.E."/>
            <person name="Grahame D.A."/>
            <person name="Guss A.M."/>
            <person name="Hedderich R."/>
            <person name="Ingram-Smith C."/>
            <person name="Kuettner H.C."/>
            <person name="Krzycki J.A."/>
            <person name="Leigh J.A."/>
            <person name="Li W."/>
            <person name="Liu J."/>
            <person name="Mukhopadhyay B."/>
            <person name="Reeve J.N."/>
            <person name="Smith K."/>
            <person name="Springer T.A."/>
            <person name="Umayam L.A."/>
            <person name="White O."/>
            <person name="White R.H."/>
            <person name="de Macario E.C."/>
            <person name="Ferry J.G."/>
            <person name="Jarrell K.F."/>
            <person name="Jing H."/>
            <person name="Macario A.J.L."/>
            <person name="Paulsen I.T."/>
            <person name="Pritchett M."/>
            <person name="Sowers K.R."/>
            <person name="Swanson R.V."/>
            <person name="Zinder S.H."/>
            <person name="Lander E."/>
            <person name="Metcalf W.W."/>
            <person name="Birren B."/>
        </authorList>
    </citation>
    <scope>NUCLEOTIDE SEQUENCE [LARGE SCALE GENOMIC DNA]</scope>
    <source>
        <strain>ATCC 35395 / DSM 2834 / JCM 12185 / C2A</strain>
    </source>
</reference>
<protein>
    <recommendedName>
        <fullName evidence="1">Small ribosomal subunit protein uS10</fullName>
    </recommendedName>
    <alternativeName>
        <fullName evidence="2">30S ribosomal protein S10</fullName>
    </alternativeName>
</protein>
<evidence type="ECO:0000255" key="1">
    <source>
        <dbReference type="HAMAP-Rule" id="MF_00508"/>
    </source>
</evidence>
<evidence type="ECO:0000305" key="2"/>
<feature type="chain" id="PRO_0000146645" description="Small ribosomal subunit protein uS10">
    <location>
        <begin position="1"/>
        <end position="102"/>
    </location>
</feature>
<name>RS10_METAC</name>
<gene>
    <name evidence="1" type="primary">rps10</name>
    <name type="ordered locus">MA_1255</name>
</gene>
<proteinExistence type="inferred from homology"/>
<sequence>MQKARIRLSGISPKDLDGVCNQVKSIAERTGVNISGPVPLPTKKLVVPTRKSPSGDGTATWDHWEMRVHKRLIDIAADERALRQLMRIQVPKDINIEIVLEG</sequence>
<comment type="function">
    <text evidence="1">Involved in the binding of tRNA to the ribosomes.</text>
</comment>
<comment type="subunit">
    <text evidence="1">Part of the 30S ribosomal subunit.</text>
</comment>
<comment type="similarity">
    <text evidence="1">Belongs to the universal ribosomal protein uS10 family.</text>
</comment>
<keyword id="KW-1185">Reference proteome</keyword>
<keyword id="KW-0687">Ribonucleoprotein</keyword>
<keyword id="KW-0689">Ribosomal protein</keyword>
<dbReference type="EMBL" id="AE010299">
    <property type="protein sequence ID" value="AAM04674.1"/>
    <property type="molecule type" value="Genomic_DNA"/>
</dbReference>
<dbReference type="RefSeq" id="WP_011021276.1">
    <property type="nucleotide sequence ID" value="NC_003552.1"/>
</dbReference>
<dbReference type="SMR" id="P61929"/>
<dbReference type="FunCoup" id="P61929">
    <property type="interactions" value="149"/>
</dbReference>
<dbReference type="STRING" id="188937.MA_1255"/>
<dbReference type="EnsemblBacteria" id="AAM04674">
    <property type="protein sequence ID" value="AAM04674"/>
    <property type="gene ID" value="MA_1255"/>
</dbReference>
<dbReference type="GeneID" id="97801476"/>
<dbReference type="KEGG" id="mac:MA_1255"/>
<dbReference type="HOGENOM" id="CLU_122625_0_1_2"/>
<dbReference type="InParanoid" id="P61929"/>
<dbReference type="OrthoDB" id="371736at2157"/>
<dbReference type="PhylomeDB" id="P61929"/>
<dbReference type="Proteomes" id="UP000002487">
    <property type="component" value="Chromosome"/>
</dbReference>
<dbReference type="GO" id="GO:0022627">
    <property type="term" value="C:cytosolic small ribosomal subunit"/>
    <property type="evidence" value="ECO:0000318"/>
    <property type="project" value="GO_Central"/>
</dbReference>
<dbReference type="GO" id="GO:0003735">
    <property type="term" value="F:structural constituent of ribosome"/>
    <property type="evidence" value="ECO:0000318"/>
    <property type="project" value="GO_Central"/>
</dbReference>
<dbReference type="GO" id="GO:0000049">
    <property type="term" value="F:tRNA binding"/>
    <property type="evidence" value="ECO:0007669"/>
    <property type="project" value="UniProtKB-UniRule"/>
</dbReference>
<dbReference type="GO" id="GO:0006412">
    <property type="term" value="P:translation"/>
    <property type="evidence" value="ECO:0007669"/>
    <property type="project" value="UniProtKB-UniRule"/>
</dbReference>
<dbReference type="FunFam" id="3.30.70.600:FF:000004">
    <property type="entry name" value="30S ribosomal protein S10"/>
    <property type="match status" value="1"/>
</dbReference>
<dbReference type="Gene3D" id="3.30.70.600">
    <property type="entry name" value="Ribosomal protein S10 domain"/>
    <property type="match status" value="1"/>
</dbReference>
<dbReference type="HAMAP" id="MF_00508">
    <property type="entry name" value="Ribosomal_uS10"/>
    <property type="match status" value="1"/>
</dbReference>
<dbReference type="InterPro" id="IPR001848">
    <property type="entry name" value="Ribosomal_uS10"/>
</dbReference>
<dbReference type="InterPro" id="IPR018268">
    <property type="entry name" value="Ribosomal_uS10_CS"/>
</dbReference>
<dbReference type="InterPro" id="IPR027486">
    <property type="entry name" value="Ribosomal_uS10_dom"/>
</dbReference>
<dbReference type="InterPro" id="IPR036838">
    <property type="entry name" value="Ribosomal_uS10_dom_sf"/>
</dbReference>
<dbReference type="InterPro" id="IPR005729">
    <property type="entry name" value="Ribosomal_uS10_euk/arc"/>
</dbReference>
<dbReference type="NCBIfam" id="TIGR01046">
    <property type="entry name" value="uS10_euk_arch"/>
    <property type="match status" value="1"/>
</dbReference>
<dbReference type="PANTHER" id="PTHR11700">
    <property type="entry name" value="30S RIBOSOMAL PROTEIN S10 FAMILY MEMBER"/>
    <property type="match status" value="1"/>
</dbReference>
<dbReference type="Pfam" id="PF00338">
    <property type="entry name" value="Ribosomal_S10"/>
    <property type="match status" value="1"/>
</dbReference>
<dbReference type="PRINTS" id="PR00971">
    <property type="entry name" value="RIBOSOMALS10"/>
</dbReference>
<dbReference type="SMART" id="SM01403">
    <property type="entry name" value="Ribosomal_S10"/>
    <property type="match status" value="1"/>
</dbReference>
<dbReference type="SUPFAM" id="SSF54999">
    <property type="entry name" value="Ribosomal protein S10"/>
    <property type="match status" value="1"/>
</dbReference>
<dbReference type="PROSITE" id="PS00361">
    <property type="entry name" value="RIBOSOMAL_S10"/>
    <property type="match status" value="1"/>
</dbReference>
<organism>
    <name type="scientific">Methanosarcina acetivorans (strain ATCC 35395 / DSM 2834 / JCM 12185 / C2A)</name>
    <dbReference type="NCBI Taxonomy" id="188937"/>
    <lineage>
        <taxon>Archaea</taxon>
        <taxon>Methanobacteriati</taxon>
        <taxon>Methanobacteriota</taxon>
        <taxon>Stenosarchaea group</taxon>
        <taxon>Methanomicrobia</taxon>
        <taxon>Methanosarcinales</taxon>
        <taxon>Methanosarcinaceae</taxon>
        <taxon>Methanosarcina</taxon>
    </lineage>
</organism>
<accession>P61929</accession>
<accession>Q8TRC5</accession>